<protein>
    <recommendedName>
        <fullName evidence="1">UPF0060 membrane protein CJA_3703</fullName>
    </recommendedName>
</protein>
<gene>
    <name type="ordered locus">CJA_3703</name>
</gene>
<evidence type="ECO:0000255" key="1">
    <source>
        <dbReference type="HAMAP-Rule" id="MF_00010"/>
    </source>
</evidence>
<comment type="subcellular location">
    <subcellularLocation>
        <location evidence="1">Cell inner membrane</location>
        <topology evidence="1">Multi-pass membrane protein</topology>
    </subcellularLocation>
</comment>
<comment type="similarity">
    <text evidence="1">Belongs to the UPF0060 family.</text>
</comment>
<dbReference type="EMBL" id="CP000934">
    <property type="protein sequence ID" value="ACE85895.1"/>
    <property type="molecule type" value="Genomic_DNA"/>
</dbReference>
<dbReference type="RefSeq" id="WP_012489275.1">
    <property type="nucleotide sequence ID" value="NC_010995.1"/>
</dbReference>
<dbReference type="SMR" id="B3PHW0"/>
<dbReference type="STRING" id="498211.CJA_3703"/>
<dbReference type="KEGG" id="cja:CJA_3703"/>
<dbReference type="eggNOG" id="COG1742">
    <property type="taxonomic scope" value="Bacteria"/>
</dbReference>
<dbReference type="HOGENOM" id="CLU_117653_2_1_6"/>
<dbReference type="OrthoDB" id="123240at2"/>
<dbReference type="Proteomes" id="UP000001036">
    <property type="component" value="Chromosome"/>
</dbReference>
<dbReference type="GO" id="GO:0005886">
    <property type="term" value="C:plasma membrane"/>
    <property type="evidence" value="ECO:0007669"/>
    <property type="project" value="UniProtKB-SubCell"/>
</dbReference>
<dbReference type="HAMAP" id="MF_00010">
    <property type="entry name" value="UPF0060"/>
    <property type="match status" value="1"/>
</dbReference>
<dbReference type="InterPro" id="IPR003844">
    <property type="entry name" value="UPF0060"/>
</dbReference>
<dbReference type="NCBIfam" id="NF002586">
    <property type="entry name" value="PRK02237.1"/>
    <property type="match status" value="1"/>
</dbReference>
<dbReference type="PANTHER" id="PTHR36116">
    <property type="entry name" value="UPF0060 MEMBRANE PROTEIN YNFA"/>
    <property type="match status" value="1"/>
</dbReference>
<dbReference type="PANTHER" id="PTHR36116:SF1">
    <property type="entry name" value="UPF0060 MEMBRANE PROTEIN YNFA"/>
    <property type="match status" value="1"/>
</dbReference>
<dbReference type="Pfam" id="PF02694">
    <property type="entry name" value="UPF0060"/>
    <property type="match status" value="1"/>
</dbReference>
<dbReference type="SUPFAM" id="SSF103481">
    <property type="entry name" value="Multidrug resistance efflux transporter EmrE"/>
    <property type="match status" value="1"/>
</dbReference>
<name>Y3703_CELJU</name>
<proteinExistence type="inferred from homology"/>
<organism>
    <name type="scientific">Cellvibrio japonicus (strain Ueda107)</name>
    <name type="common">Pseudomonas fluorescens subsp. cellulosa</name>
    <dbReference type="NCBI Taxonomy" id="498211"/>
    <lineage>
        <taxon>Bacteria</taxon>
        <taxon>Pseudomonadati</taxon>
        <taxon>Pseudomonadota</taxon>
        <taxon>Gammaproteobacteria</taxon>
        <taxon>Cellvibrionales</taxon>
        <taxon>Cellvibrionaceae</taxon>
        <taxon>Cellvibrio</taxon>
    </lineage>
</organism>
<sequence length="108" mass="11746">MLKTTLLFVVTALAEIIGCFLPYLWLRKGGSIWLLLPAALSLALFAWLLTLHPTASGRVYAAYGGVYVAVALLWLYWVDGVKLSAYDWAGAAVALLGMAIIAMGWQRS</sequence>
<feature type="chain" id="PRO_1000089240" description="UPF0060 membrane protein CJA_3703">
    <location>
        <begin position="1"/>
        <end position="108"/>
    </location>
</feature>
<feature type="transmembrane region" description="Helical" evidence="1">
    <location>
        <begin position="6"/>
        <end position="26"/>
    </location>
</feature>
<feature type="transmembrane region" description="Helical" evidence="1">
    <location>
        <begin position="31"/>
        <end position="51"/>
    </location>
</feature>
<feature type="transmembrane region" description="Helical" evidence="1">
    <location>
        <begin position="61"/>
        <end position="81"/>
    </location>
</feature>
<feature type="transmembrane region" description="Helical" evidence="1">
    <location>
        <begin position="85"/>
        <end position="105"/>
    </location>
</feature>
<accession>B3PHW0</accession>
<reference key="1">
    <citation type="journal article" date="2008" name="J. Bacteriol.">
        <title>Insights into plant cell wall degradation from the genome sequence of the soil bacterium Cellvibrio japonicus.</title>
        <authorList>
            <person name="DeBoy R.T."/>
            <person name="Mongodin E.F."/>
            <person name="Fouts D.E."/>
            <person name="Tailford L.E."/>
            <person name="Khouri H."/>
            <person name="Emerson J.B."/>
            <person name="Mohamoud Y."/>
            <person name="Watkins K."/>
            <person name="Henrissat B."/>
            <person name="Gilbert H.J."/>
            <person name="Nelson K.E."/>
        </authorList>
    </citation>
    <scope>NUCLEOTIDE SEQUENCE [LARGE SCALE GENOMIC DNA]</scope>
    <source>
        <strain>Ueda107</strain>
    </source>
</reference>
<keyword id="KW-0997">Cell inner membrane</keyword>
<keyword id="KW-1003">Cell membrane</keyword>
<keyword id="KW-0472">Membrane</keyword>
<keyword id="KW-1185">Reference proteome</keyword>
<keyword id="KW-0812">Transmembrane</keyword>
<keyword id="KW-1133">Transmembrane helix</keyword>